<comment type="catalytic activity">
    <reaction>
        <text>L-seryl-[protein] + ATP = O-phospho-L-seryl-[protein] + ADP + H(+)</text>
        <dbReference type="Rhea" id="RHEA:17989"/>
        <dbReference type="Rhea" id="RHEA-COMP:9863"/>
        <dbReference type="Rhea" id="RHEA-COMP:11604"/>
        <dbReference type="ChEBI" id="CHEBI:15378"/>
        <dbReference type="ChEBI" id="CHEBI:29999"/>
        <dbReference type="ChEBI" id="CHEBI:30616"/>
        <dbReference type="ChEBI" id="CHEBI:83421"/>
        <dbReference type="ChEBI" id="CHEBI:456216"/>
        <dbReference type="EC" id="2.7.11.1"/>
    </reaction>
</comment>
<comment type="catalytic activity">
    <reaction>
        <text>L-threonyl-[protein] + ATP = O-phospho-L-threonyl-[protein] + ADP + H(+)</text>
        <dbReference type="Rhea" id="RHEA:46608"/>
        <dbReference type="Rhea" id="RHEA-COMP:11060"/>
        <dbReference type="Rhea" id="RHEA-COMP:11605"/>
        <dbReference type="ChEBI" id="CHEBI:15378"/>
        <dbReference type="ChEBI" id="CHEBI:30013"/>
        <dbReference type="ChEBI" id="CHEBI:30616"/>
        <dbReference type="ChEBI" id="CHEBI:61977"/>
        <dbReference type="ChEBI" id="CHEBI:456216"/>
        <dbReference type="EC" id="2.7.11.1"/>
    </reaction>
</comment>
<comment type="subcellular location">
    <subcellularLocation>
        <location evidence="4">Cytoplasm</location>
    </subcellularLocation>
    <subcellularLocation>
        <location evidence="4">Cytoplasm</location>
        <location evidence="4">Cytoskeleton</location>
        <location evidence="4">Microtubule organizing center</location>
        <location evidence="4">Spindle pole body</location>
    </subcellularLocation>
</comment>
<comment type="similarity">
    <text evidence="1">Belongs to the protein kinase superfamily. Ser/Thr protein kinase family.</text>
</comment>
<reference key="1">
    <citation type="journal article" date="2002" name="Nature">
        <title>The genome sequence of Schizosaccharomyces pombe.</title>
        <authorList>
            <person name="Wood V."/>
            <person name="Gwilliam R."/>
            <person name="Rajandream M.A."/>
            <person name="Lyne M.H."/>
            <person name="Lyne R."/>
            <person name="Stewart A."/>
            <person name="Sgouros J.G."/>
            <person name="Peat N."/>
            <person name="Hayles J."/>
            <person name="Baker S.G."/>
            <person name="Basham D."/>
            <person name="Bowman S."/>
            <person name="Brooks K."/>
            <person name="Brown D."/>
            <person name="Brown S."/>
            <person name="Chillingworth T."/>
            <person name="Churcher C.M."/>
            <person name="Collins M."/>
            <person name="Connor R."/>
            <person name="Cronin A."/>
            <person name="Davis P."/>
            <person name="Feltwell T."/>
            <person name="Fraser A."/>
            <person name="Gentles S."/>
            <person name="Goble A."/>
            <person name="Hamlin N."/>
            <person name="Harris D.E."/>
            <person name="Hidalgo J."/>
            <person name="Hodgson G."/>
            <person name="Holroyd S."/>
            <person name="Hornsby T."/>
            <person name="Howarth S."/>
            <person name="Huckle E.J."/>
            <person name="Hunt S."/>
            <person name="Jagels K."/>
            <person name="James K.D."/>
            <person name="Jones L."/>
            <person name="Jones M."/>
            <person name="Leather S."/>
            <person name="McDonald S."/>
            <person name="McLean J."/>
            <person name="Mooney P."/>
            <person name="Moule S."/>
            <person name="Mungall K.L."/>
            <person name="Murphy L.D."/>
            <person name="Niblett D."/>
            <person name="Odell C."/>
            <person name="Oliver K."/>
            <person name="O'Neil S."/>
            <person name="Pearson D."/>
            <person name="Quail M.A."/>
            <person name="Rabbinowitsch E."/>
            <person name="Rutherford K.M."/>
            <person name="Rutter S."/>
            <person name="Saunders D."/>
            <person name="Seeger K."/>
            <person name="Sharp S."/>
            <person name="Skelton J."/>
            <person name="Simmonds M.N."/>
            <person name="Squares R."/>
            <person name="Squares S."/>
            <person name="Stevens K."/>
            <person name="Taylor K."/>
            <person name="Taylor R.G."/>
            <person name="Tivey A."/>
            <person name="Walsh S.V."/>
            <person name="Warren T."/>
            <person name="Whitehead S."/>
            <person name="Woodward J.R."/>
            <person name="Volckaert G."/>
            <person name="Aert R."/>
            <person name="Robben J."/>
            <person name="Grymonprez B."/>
            <person name="Weltjens I."/>
            <person name="Vanstreels E."/>
            <person name="Rieger M."/>
            <person name="Schaefer M."/>
            <person name="Mueller-Auer S."/>
            <person name="Gabel C."/>
            <person name="Fuchs M."/>
            <person name="Duesterhoeft A."/>
            <person name="Fritzc C."/>
            <person name="Holzer E."/>
            <person name="Moestl D."/>
            <person name="Hilbert H."/>
            <person name="Borzym K."/>
            <person name="Langer I."/>
            <person name="Beck A."/>
            <person name="Lehrach H."/>
            <person name="Reinhardt R."/>
            <person name="Pohl T.M."/>
            <person name="Eger P."/>
            <person name="Zimmermann W."/>
            <person name="Wedler H."/>
            <person name="Wambutt R."/>
            <person name="Purnelle B."/>
            <person name="Goffeau A."/>
            <person name="Cadieu E."/>
            <person name="Dreano S."/>
            <person name="Gloux S."/>
            <person name="Lelaure V."/>
            <person name="Mottier S."/>
            <person name="Galibert F."/>
            <person name="Aves S.J."/>
            <person name="Xiang Z."/>
            <person name="Hunt C."/>
            <person name="Moore K."/>
            <person name="Hurst S.M."/>
            <person name="Lucas M."/>
            <person name="Rochet M."/>
            <person name="Gaillardin C."/>
            <person name="Tallada V.A."/>
            <person name="Garzon A."/>
            <person name="Thode G."/>
            <person name="Daga R.R."/>
            <person name="Cruzado L."/>
            <person name="Jimenez J."/>
            <person name="Sanchez M."/>
            <person name="del Rey F."/>
            <person name="Benito J."/>
            <person name="Dominguez A."/>
            <person name="Revuelta J.L."/>
            <person name="Moreno S."/>
            <person name="Armstrong J."/>
            <person name="Forsburg S.L."/>
            <person name="Cerutti L."/>
            <person name="Lowe T."/>
            <person name="McCombie W.R."/>
            <person name="Paulsen I."/>
            <person name="Potashkin J."/>
            <person name="Shpakovski G.V."/>
            <person name="Ussery D."/>
            <person name="Barrell B.G."/>
            <person name="Nurse P."/>
        </authorList>
    </citation>
    <scope>NUCLEOTIDE SEQUENCE [LARGE SCALE GENOMIC DNA]</scope>
    <source>
        <strain>972 / ATCC 24843</strain>
    </source>
</reference>
<reference key="2">
    <citation type="journal article" date="2005" name="Eukaryot. Cell">
        <title>Systematic deletion analysis of fission yeast protein kinases.</title>
        <authorList>
            <person name="Bimbo A."/>
            <person name="Jia Y."/>
            <person name="Poh S.L."/>
            <person name="Karuturi R.K.M."/>
            <person name="den Elzen N."/>
            <person name="Peng X."/>
            <person name="Zheng L."/>
            <person name="O'Connell M."/>
            <person name="Liu E.T."/>
            <person name="Balasubramanian M.K."/>
            <person name="Liu J."/>
        </authorList>
    </citation>
    <scope>IDENTIFICATION</scope>
</reference>
<reference key="3">
    <citation type="journal article" date="2006" name="Nat. Biotechnol.">
        <title>ORFeome cloning and global analysis of protein localization in the fission yeast Schizosaccharomyces pombe.</title>
        <authorList>
            <person name="Matsuyama A."/>
            <person name="Arai R."/>
            <person name="Yashiroda Y."/>
            <person name="Shirai A."/>
            <person name="Kamata A."/>
            <person name="Sekido S."/>
            <person name="Kobayashi Y."/>
            <person name="Hashimoto A."/>
            <person name="Hamamoto M."/>
            <person name="Hiraoka Y."/>
            <person name="Horinouchi S."/>
            <person name="Yoshida M."/>
        </authorList>
    </citation>
    <scope>SUBCELLULAR LOCATION [LARGE SCALE ANALYSIS]</scope>
</reference>
<reference key="4">
    <citation type="journal article" date="2008" name="J. Proteome Res.">
        <title>Phosphoproteome analysis of fission yeast.</title>
        <authorList>
            <person name="Wilson-Grady J.T."/>
            <person name="Villen J."/>
            <person name="Gygi S.P."/>
        </authorList>
    </citation>
    <scope>PHOSPHORYLATION [LARGE SCALE ANALYSIS] AT SER-33; SER-56; SER-60 AND TYR-291</scope>
    <scope>IDENTIFICATION BY MASS SPECTROMETRY</scope>
</reference>
<organism>
    <name type="scientific">Schizosaccharomyces pombe (strain 972 / ATCC 24843)</name>
    <name type="common">Fission yeast</name>
    <dbReference type="NCBI Taxonomy" id="284812"/>
    <lineage>
        <taxon>Eukaryota</taxon>
        <taxon>Fungi</taxon>
        <taxon>Dikarya</taxon>
        <taxon>Ascomycota</taxon>
        <taxon>Taphrinomycotina</taxon>
        <taxon>Schizosaccharomycetes</taxon>
        <taxon>Schizosaccharomycetales</taxon>
        <taxon>Schizosaccharomycetaceae</taxon>
        <taxon>Schizosaccharomyces</taxon>
    </lineage>
</organism>
<keyword id="KW-0067">ATP-binding</keyword>
<keyword id="KW-0963">Cytoplasm</keyword>
<keyword id="KW-0206">Cytoskeleton</keyword>
<keyword id="KW-0418">Kinase</keyword>
<keyword id="KW-0547">Nucleotide-binding</keyword>
<keyword id="KW-0597">Phosphoprotein</keyword>
<keyword id="KW-1185">Reference proteome</keyword>
<keyword id="KW-0723">Serine/threonine-protein kinase</keyword>
<keyword id="KW-0808">Transferase</keyword>
<gene>
    <name type="primary">ppk15</name>
    <name type="ORF">SPAC1E11.03</name>
    <name type="ORF">SPAC823.03</name>
</gene>
<feature type="chain" id="PRO_0000086140" description="Serine/threonine-protein kinase ppk15">
    <location>
        <begin position="1"/>
        <end position="534"/>
    </location>
</feature>
<feature type="domain" description="Protein kinase" evidence="1">
    <location>
        <begin position="130"/>
        <end position="458"/>
    </location>
</feature>
<feature type="region of interest" description="Disordered" evidence="3">
    <location>
        <begin position="1"/>
        <end position="40"/>
    </location>
</feature>
<feature type="region of interest" description="Disordered" evidence="3">
    <location>
        <begin position="85"/>
        <end position="104"/>
    </location>
</feature>
<feature type="active site" description="Proton acceptor" evidence="1 2">
    <location>
        <position position="257"/>
    </location>
</feature>
<feature type="binding site" evidence="1">
    <location>
        <begin position="136"/>
        <end position="144"/>
    </location>
    <ligand>
        <name>ATP</name>
        <dbReference type="ChEBI" id="CHEBI:30616"/>
    </ligand>
</feature>
<feature type="binding site" evidence="1">
    <location>
        <position position="159"/>
    </location>
    <ligand>
        <name>ATP</name>
        <dbReference type="ChEBI" id="CHEBI:30616"/>
    </ligand>
</feature>
<feature type="modified residue" description="Phosphoserine" evidence="5">
    <location>
        <position position="33"/>
    </location>
</feature>
<feature type="modified residue" description="Phosphoserine" evidence="5">
    <location>
        <position position="56"/>
    </location>
</feature>
<feature type="modified residue" description="Phosphoserine" evidence="5">
    <location>
        <position position="60"/>
    </location>
</feature>
<feature type="modified residue" description="Phosphotyrosine" evidence="5">
    <location>
        <position position="291"/>
    </location>
</feature>
<name>PPK15_SCHPO</name>
<proteinExistence type="evidence at protein level"/>
<dbReference type="EC" id="2.7.11.1"/>
<dbReference type="EMBL" id="CU329670">
    <property type="protein sequence ID" value="CAB90148.1"/>
    <property type="molecule type" value="Genomic_DNA"/>
</dbReference>
<dbReference type="EMBL" id="Z98599">
    <property type="protein sequence ID" value="CAB40210.1"/>
    <property type="molecule type" value="Genomic_DNA"/>
</dbReference>
<dbReference type="PIR" id="T38058">
    <property type="entry name" value="T38058"/>
</dbReference>
<dbReference type="RefSeq" id="NP_593830.1">
    <property type="nucleotide sequence ID" value="NM_001019259.2"/>
</dbReference>
<dbReference type="SMR" id="Q9P6P3"/>
<dbReference type="BioGRID" id="278701">
    <property type="interactions" value="26"/>
</dbReference>
<dbReference type="FunCoup" id="Q9P6P3">
    <property type="interactions" value="428"/>
</dbReference>
<dbReference type="STRING" id="284812.Q9P6P3"/>
<dbReference type="iPTMnet" id="Q9P6P3"/>
<dbReference type="PaxDb" id="4896-SPAC823.03.1"/>
<dbReference type="EnsemblFungi" id="SPAC823.03.1">
    <property type="protein sequence ID" value="SPAC823.03.1:pep"/>
    <property type="gene ID" value="SPAC823.03"/>
</dbReference>
<dbReference type="GeneID" id="2542228"/>
<dbReference type="KEGG" id="spo:2542228"/>
<dbReference type="PomBase" id="SPAC823.03">
    <property type="gene designation" value="ppk15"/>
</dbReference>
<dbReference type="VEuPathDB" id="FungiDB:SPAC823.03"/>
<dbReference type="eggNOG" id="KOG0667">
    <property type="taxonomic scope" value="Eukaryota"/>
</dbReference>
<dbReference type="HOGENOM" id="CLU_000288_5_15_1"/>
<dbReference type="InParanoid" id="Q9P6P3"/>
<dbReference type="OMA" id="QARIIHC"/>
<dbReference type="PhylomeDB" id="Q9P6P3"/>
<dbReference type="Reactome" id="R-SPO-3899300">
    <property type="pathway name" value="SUMOylation of transcription cofactors"/>
</dbReference>
<dbReference type="PRO" id="PR:Q9P6P3"/>
<dbReference type="Proteomes" id="UP000002485">
    <property type="component" value="Chromosome I"/>
</dbReference>
<dbReference type="GO" id="GO:0051286">
    <property type="term" value="C:cell tip"/>
    <property type="evidence" value="ECO:0007005"/>
    <property type="project" value="PomBase"/>
</dbReference>
<dbReference type="GO" id="GO:0005737">
    <property type="term" value="C:cytoplasm"/>
    <property type="evidence" value="ECO:0000318"/>
    <property type="project" value="GO_Central"/>
</dbReference>
<dbReference type="GO" id="GO:0005829">
    <property type="term" value="C:cytosol"/>
    <property type="evidence" value="ECO:0007005"/>
    <property type="project" value="PomBase"/>
</dbReference>
<dbReference type="GO" id="GO:0044732">
    <property type="term" value="C:mitotic spindle pole body"/>
    <property type="evidence" value="ECO:0007005"/>
    <property type="project" value="PomBase"/>
</dbReference>
<dbReference type="GO" id="GO:0005634">
    <property type="term" value="C:nucleus"/>
    <property type="evidence" value="ECO:0000318"/>
    <property type="project" value="GO_Central"/>
</dbReference>
<dbReference type="GO" id="GO:0005524">
    <property type="term" value="F:ATP binding"/>
    <property type="evidence" value="ECO:0000255"/>
    <property type="project" value="PomBase"/>
</dbReference>
<dbReference type="GO" id="GO:0106310">
    <property type="term" value="F:protein serine kinase activity"/>
    <property type="evidence" value="ECO:0007669"/>
    <property type="project" value="RHEA"/>
</dbReference>
<dbReference type="GO" id="GO:0004674">
    <property type="term" value="F:protein serine/threonine kinase activity"/>
    <property type="evidence" value="ECO:0000318"/>
    <property type="project" value="GO_Central"/>
</dbReference>
<dbReference type="GO" id="GO:0004713">
    <property type="term" value="F:protein tyrosine kinase activity"/>
    <property type="evidence" value="ECO:0000318"/>
    <property type="project" value="GO_Central"/>
</dbReference>
<dbReference type="GO" id="GO:0032878">
    <property type="term" value="P:regulation of establishment or maintenance of cell polarity"/>
    <property type="evidence" value="ECO:0000315"/>
    <property type="project" value="PomBase"/>
</dbReference>
<dbReference type="GO" id="GO:0023052">
    <property type="term" value="P:signaling"/>
    <property type="evidence" value="ECO:0000303"/>
    <property type="project" value="PomBase"/>
</dbReference>
<dbReference type="CDD" id="cd14212">
    <property type="entry name" value="PKc_YAK1"/>
    <property type="match status" value="1"/>
</dbReference>
<dbReference type="FunFam" id="3.30.200.20:FF:000087">
    <property type="entry name" value="Dual specificity tyrosine-phosphorylation-regulated kinase 1A"/>
    <property type="match status" value="1"/>
</dbReference>
<dbReference type="FunFam" id="1.10.510.10:FF:000380">
    <property type="entry name" value="Serine/threonine-protein kinase ppk15"/>
    <property type="match status" value="1"/>
</dbReference>
<dbReference type="Gene3D" id="3.30.200.20">
    <property type="entry name" value="Phosphorylase Kinase, domain 1"/>
    <property type="match status" value="1"/>
</dbReference>
<dbReference type="Gene3D" id="1.10.510.10">
    <property type="entry name" value="Transferase(Phosphotransferase) domain 1"/>
    <property type="match status" value="1"/>
</dbReference>
<dbReference type="InterPro" id="IPR011009">
    <property type="entry name" value="Kinase-like_dom_sf"/>
</dbReference>
<dbReference type="InterPro" id="IPR000719">
    <property type="entry name" value="Prot_kinase_dom"/>
</dbReference>
<dbReference type="InterPro" id="IPR017441">
    <property type="entry name" value="Protein_kinase_ATP_BS"/>
</dbReference>
<dbReference type="InterPro" id="IPR008271">
    <property type="entry name" value="Ser/Thr_kinase_AS"/>
</dbReference>
<dbReference type="InterPro" id="IPR050494">
    <property type="entry name" value="Ser_Thr_dual-spec_kinase"/>
</dbReference>
<dbReference type="PANTHER" id="PTHR24058">
    <property type="entry name" value="DUAL SPECIFICITY PROTEIN KINASE"/>
    <property type="match status" value="1"/>
</dbReference>
<dbReference type="PANTHER" id="PTHR24058:SF17">
    <property type="entry name" value="HOMEODOMAIN INTERACTING PROTEIN KINASE, ISOFORM D"/>
    <property type="match status" value="1"/>
</dbReference>
<dbReference type="Pfam" id="PF00069">
    <property type="entry name" value="Pkinase"/>
    <property type="match status" value="1"/>
</dbReference>
<dbReference type="SMART" id="SM00220">
    <property type="entry name" value="S_TKc"/>
    <property type="match status" value="1"/>
</dbReference>
<dbReference type="SUPFAM" id="SSF56112">
    <property type="entry name" value="Protein kinase-like (PK-like)"/>
    <property type="match status" value="1"/>
</dbReference>
<dbReference type="PROSITE" id="PS00107">
    <property type="entry name" value="PROTEIN_KINASE_ATP"/>
    <property type="match status" value="1"/>
</dbReference>
<dbReference type="PROSITE" id="PS50011">
    <property type="entry name" value="PROTEIN_KINASE_DOM"/>
    <property type="match status" value="1"/>
</dbReference>
<dbReference type="PROSITE" id="PS00108">
    <property type="entry name" value="PROTEIN_KINASE_ST"/>
    <property type="match status" value="1"/>
</dbReference>
<sequence length="534" mass="61491">MDSDSPILPLSNNPPAARTHDHSQRNNHARHVSSSGTTLFAPVKPATKKYNYRRVSPHGSYISPLEAMTVKLADTYSICNPKFQFSSEQNPRRPLTKPSEGVHNHGFDNVNHDYVLYVNDLLGTDEGRKYLILDTLGHGTFGQVARCQDLKTQQIVAIKVIKNKPAFYNQCVMEVSILELLNNKYDPEDKRHLIRLYDQFMHKNHLCLVFELLSINLYELIKQNQFRGLHLSLVRSFATQLLSCTSLLKQARIIHCDLKPENILLQDLSSPIVKVIDFGSACHERQTVYTYIQSRFYRSPEVILGLHYNCGIDMWSLGCILAELFLGLPLFPGNSEYNQLCRIVDMLGNPPTWMLEMGKNSKKYYNSGFVNGRKTYELKSIEQFSIENNKTEQPGKQYFGEKTLDAIVLNYPRRKTTPKLTPEEHEERLCFIDFIKQFLELNPLKRWTPDQAKNHPFITGASFSQYCIDKQKPLLTTQRTRNRSHTIGNQAVVPPSLQRASTYVSNEPEEFVHTRPLPQYYPPANENENVDEFF</sequence>
<protein>
    <recommendedName>
        <fullName>Serine/threonine-protein kinase ppk15</fullName>
        <ecNumber>2.7.11.1</ecNumber>
    </recommendedName>
</protein>
<accession>Q9P6P3</accession>
<accession>Q9Y7I2</accession>
<evidence type="ECO:0000255" key="1">
    <source>
        <dbReference type="PROSITE-ProRule" id="PRU00159"/>
    </source>
</evidence>
<evidence type="ECO:0000255" key="2">
    <source>
        <dbReference type="PROSITE-ProRule" id="PRU10027"/>
    </source>
</evidence>
<evidence type="ECO:0000256" key="3">
    <source>
        <dbReference type="SAM" id="MobiDB-lite"/>
    </source>
</evidence>
<evidence type="ECO:0000269" key="4">
    <source>
    </source>
</evidence>
<evidence type="ECO:0000269" key="5">
    <source>
    </source>
</evidence>